<name>CASP3_PIG</name>
<organism>
    <name type="scientific">Sus scrofa</name>
    <name type="common">Pig</name>
    <dbReference type="NCBI Taxonomy" id="9823"/>
    <lineage>
        <taxon>Eukaryota</taxon>
        <taxon>Metazoa</taxon>
        <taxon>Chordata</taxon>
        <taxon>Craniata</taxon>
        <taxon>Vertebrata</taxon>
        <taxon>Euteleostomi</taxon>
        <taxon>Mammalia</taxon>
        <taxon>Eutheria</taxon>
        <taxon>Laurasiatheria</taxon>
        <taxon>Artiodactyla</taxon>
        <taxon>Suina</taxon>
        <taxon>Suidae</taxon>
        <taxon>Sus</taxon>
    </lineage>
</organism>
<dbReference type="EC" id="3.4.22.56"/>
<dbReference type="EMBL" id="AB029345">
    <property type="protein sequence ID" value="BAB55544.1"/>
    <property type="molecule type" value="mRNA"/>
</dbReference>
<dbReference type="RefSeq" id="NP_999296.1">
    <property type="nucleotide sequence ID" value="NM_214131.1"/>
</dbReference>
<dbReference type="SMR" id="Q95ND5"/>
<dbReference type="FunCoup" id="Q95ND5">
    <property type="interactions" value="1187"/>
</dbReference>
<dbReference type="STRING" id="9823.ENSSSCP00000049424"/>
<dbReference type="MEROPS" id="C14.003"/>
<dbReference type="PaxDb" id="9823-ENSSSCP00000016724"/>
<dbReference type="PeptideAtlas" id="Q95ND5"/>
<dbReference type="GeneID" id="397244"/>
<dbReference type="KEGG" id="ssc:397244"/>
<dbReference type="CTD" id="836"/>
<dbReference type="eggNOG" id="KOG3573">
    <property type="taxonomic scope" value="Eukaryota"/>
</dbReference>
<dbReference type="InParanoid" id="Q95ND5"/>
<dbReference type="OrthoDB" id="6116485at2759"/>
<dbReference type="Proteomes" id="UP000008227">
    <property type="component" value="Unplaced"/>
</dbReference>
<dbReference type="Proteomes" id="UP000314985">
    <property type="component" value="Unplaced"/>
</dbReference>
<dbReference type="Proteomes" id="UP000694570">
    <property type="component" value="Unplaced"/>
</dbReference>
<dbReference type="Proteomes" id="UP000694571">
    <property type="component" value="Unplaced"/>
</dbReference>
<dbReference type="Proteomes" id="UP000694720">
    <property type="component" value="Unplaced"/>
</dbReference>
<dbReference type="Proteomes" id="UP000694722">
    <property type="component" value="Unplaced"/>
</dbReference>
<dbReference type="Proteomes" id="UP000694723">
    <property type="component" value="Unplaced"/>
</dbReference>
<dbReference type="Proteomes" id="UP000694724">
    <property type="component" value="Unplaced"/>
</dbReference>
<dbReference type="Proteomes" id="UP000694725">
    <property type="component" value="Unplaced"/>
</dbReference>
<dbReference type="Proteomes" id="UP000694726">
    <property type="component" value="Unplaced"/>
</dbReference>
<dbReference type="Proteomes" id="UP000694727">
    <property type="component" value="Unplaced"/>
</dbReference>
<dbReference type="Proteomes" id="UP000694728">
    <property type="component" value="Unplaced"/>
</dbReference>
<dbReference type="GO" id="GO:0005737">
    <property type="term" value="C:cytoplasm"/>
    <property type="evidence" value="ECO:0000314"/>
    <property type="project" value="AgBase"/>
</dbReference>
<dbReference type="GO" id="GO:0031264">
    <property type="term" value="C:death-inducing signaling complex"/>
    <property type="evidence" value="ECO:0000318"/>
    <property type="project" value="GO_Central"/>
</dbReference>
<dbReference type="GO" id="GO:0005634">
    <property type="term" value="C:nucleus"/>
    <property type="evidence" value="ECO:0000314"/>
    <property type="project" value="AgBase"/>
</dbReference>
<dbReference type="GO" id="GO:0004197">
    <property type="term" value="F:cysteine-type endopeptidase activity"/>
    <property type="evidence" value="ECO:0000250"/>
    <property type="project" value="UniProtKB"/>
</dbReference>
<dbReference type="GO" id="GO:0004175">
    <property type="term" value="F:endopeptidase activity"/>
    <property type="evidence" value="ECO:0000250"/>
    <property type="project" value="UniProtKB"/>
</dbReference>
<dbReference type="GO" id="GO:0008047">
    <property type="term" value="F:enzyme activator activity"/>
    <property type="evidence" value="ECO:0000318"/>
    <property type="project" value="GO_Central"/>
</dbReference>
<dbReference type="GO" id="GO:0006915">
    <property type="term" value="P:apoptotic process"/>
    <property type="evidence" value="ECO:0000318"/>
    <property type="project" value="GO_Central"/>
</dbReference>
<dbReference type="GO" id="GO:0030218">
    <property type="term" value="P:erythrocyte differentiation"/>
    <property type="evidence" value="ECO:0000318"/>
    <property type="project" value="GO_Central"/>
</dbReference>
<dbReference type="GO" id="GO:0097194">
    <property type="term" value="P:execution phase of apoptosis"/>
    <property type="evidence" value="ECO:0000318"/>
    <property type="project" value="GO_Central"/>
</dbReference>
<dbReference type="GO" id="GO:0030216">
    <property type="term" value="P:keratinocyte differentiation"/>
    <property type="evidence" value="ECO:0000318"/>
    <property type="project" value="GO_Central"/>
</dbReference>
<dbReference type="GO" id="GO:0030182">
    <property type="term" value="P:neuron differentiation"/>
    <property type="evidence" value="ECO:0000318"/>
    <property type="project" value="GO_Central"/>
</dbReference>
<dbReference type="GO" id="GO:1902004">
    <property type="term" value="P:positive regulation of amyloid-beta formation"/>
    <property type="evidence" value="ECO:0000250"/>
    <property type="project" value="UniProtKB"/>
</dbReference>
<dbReference type="GO" id="GO:0043525">
    <property type="term" value="P:positive regulation of neuron apoptotic process"/>
    <property type="evidence" value="ECO:0000318"/>
    <property type="project" value="GO_Central"/>
</dbReference>
<dbReference type="GO" id="GO:0006508">
    <property type="term" value="P:proteolysis"/>
    <property type="evidence" value="ECO:0000250"/>
    <property type="project" value="UniProtKB"/>
</dbReference>
<dbReference type="GO" id="GO:0031647">
    <property type="term" value="P:regulation of protein stability"/>
    <property type="evidence" value="ECO:0000250"/>
    <property type="project" value="UniProtKB"/>
</dbReference>
<dbReference type="CDD" id="cd00032">
    <property type="entry name" value="CASc"/>
    <property type="match status" value="1"/>
</dbReference>
<dbReference type="FunFam" id="3.40.50.1460:FF:000001">
    <property type="entry name" value="Caspase-3 preproprotein"/>
    <property type="match status" value="1"/>
</dbReference>
<dbReference type="Gene3D" id="3.40.50.1460">
    <property type="match status" value="1"/>
</dbReference>
<dbReference type="InterPro" id="IPR029030">
    <property type="entry name" value="Caspase-like_dom_sf"/>
</dbReference>
<dbReference type="InterPro" id="IPR033139">
    <property type="entry name" value="Caspase_cys_AS"/>
</dbReference>
<dbReference type="InterPro" id="IPR016129">
    <property type="entry name" value="Caspase_his_AS"/>
</dbReference>
<dbReference type="InterPro" id="IPR002398">
    <property type="entry name" value="Pept_C14"/>
</dbReference>
<dbReference type="InterPro" id="IPR011600">
    <property type="entry name" value="Pept_C14_caspase"/>
</dbReference>
<dbReference type="InterPro" id="IPR002138">
    <property type="entry name" value="Pept_C14_p10"/>
</dbReference>
<dbReference type="InterPro" id="IPR001309">
    <property type="entry name" value="Pept_C14_p20"/>
</dbReference>
<dbReference type="InterPro" id="IPR015917">
    <property type="entry name" value="Pept_C14A"/>
</dbReference>
<dbReference type="PANTHER" id="PTHR10454">
    <property type="entry name" value="CASPASE"/>
    <property type="match status" value="1"/>
</dbReference>
<dbReference type="PANTHER" id="PTHR10454:SF198">
    <property type="entry name" value="CASPASE-3"/>
    <property type="match status" value="1"/>
</dbReference>
<dbReference type="Pfam" id="PF00656">
    <property type="entry name" value="Peptidase_C14"/>
    <property type="match status" value="1"/>
</dbReference>
<dbReference type="PRINTS" id="PR00376">
    <property type="entry name" value="IL1BCENZYME"/>
</dbReference>
<dbReference type="SMART" id="SM00115">
    <property type="entry name" value="CASc"/>
    <property type="match status" value="1"/>
</dbReference>
<dbReference type="SUPFAM" id="SSF52129">
    <property type="entry name" value="Caspase-like"/>
    <property type="match status" value="1"/>
</dbReference>
<dbReference type="PROSITE" id="PS01122">
    <property type="entry name" value="CASPASE_CYS"/>
    <property type="match status" value="1"/>
</dbReference>
<dbReference type="PROSITE" id="PS01121">
    <property type="entry name" value="CASPASE_HIS"/>
    <property type="match status" value="1"/>
</dbReference>
<dbReference type="PROSITE" id="PS50207">
    <property type="entry name" value="CASPASE_P10"/>
    <property type="match status" value="1"/>
</dbReference>
<dbReference type="PROSITE" id="PS50208">
    <property type="entry name" value="CASPASE_P20"/>
    <property type="match status" value="1"/>
</dbReference>
<accession>Q95ND5</accession>
<sequence length="277" mass="31379">MENNKTSVDSKSIKTLETKILHGSKSMDSGISLDVSYKMDYPEMGLCIIINNKNFDKNTGMACRSGTDVDAANLRETFTNLKYEVRNKNDLTREEILELMHSVSKEDHSKRSSFICVLLSHGEEGKIFGTNGPVDLKKLTSFFRGDCCRTLTGKPKLFIIQACRGTELDCGIETDSGTEDDMACQKIPVEADFLYAYSTAPGYYSWRNSKDGSWFIQSLCAALKQYVHKLELMHILTRVNRKVAVEFESFSTDSTFHAKKQIPCIVSMLTKELYFYH</sequence>
<reference key="1">
    <citation type="journal article" date="2001" name="J. Interferon Cytokine Res.">
        <title>Porcine caspase-3: its cloning and activity during apoptosis of PK15 cells induced by porcine Fas ligand.</title>
        <authorList>
            <person name="Muneta Y."/>
            <person name="Shimojima Y."/>
            <person name="Mori Y."/>
        </authorList>
    </citation>
    <scope>NUCLEOTIDE SEQUENCE [MRNA]</scope>
</reference>
<reference key="2">
    <citation type="journal article" date="2001" name="J. Virol.">
        <title>African swine fever virus IAP homologue inhibits caspase activation and promotes cell survival in mammalian cells.</title>
        <authorList>
            <person name="Nogal M.L."/>
            <person name="Gonzalez de Buitrago G."/>
            <person name="Rodriguez C."/>
            <person name="Cubelos B."/>
            <person name="Carrascosa A.L."/>
            <person name="Salas M.L."/>
            <person name="Revilla Y."/>
        </authorList>
    </citation>
    <scope>INTERACTION WITH ASFV INHIBITOR OF APOPTOSIS PROTEIN</scope>
</reference>
<protein>
    <recommendedName>
        <fullName>Caspase-3</fullName>
        <shortName>CASP-3</shortName>
        <ecNumber>3.4.22.56</ecNumber>
    </recommendedName>
    <component>
        <recommendedName>
            <fullName>Caspase-3 subunit p17</fullName>
        </recommendedName>
    </component>
    <component>
        <recommendedName>
            <fullName>Caspase-3 subunit p12</fullName>
        </recommendedName>
    </component>
</protein>
<gene>
    <name type="primary">CASP3</name>
</gene>
<keyword id="KW-0007">Acetylation</keyword>
<keyword id="KW-0053">Apoptosis</keyword>
<keyword id="KW-0963">Cytoplasm</keyword>
<keyword id="KW-0945">Host-virus interaction</keyword>
<keyword id="KW-0378">Hydrolase</keyword>
<keyword id="KW-0597">Phosphoprotein</keyword>
<keyword id="KW-0645">Protease</keyword>
<keyword id="KW-1185">Reference proteome</keyword>
<keyword id="KW-0702">S-nitrosylation</keyword>
<keyword id="KW-0788">Thiol protease</keyword>
<keyword id="KW-0832">Ubl conjugation</keyword>
<keyword id="KW-0865">Zymogen</keyword>
<comment type="function">
    <text evidence="2 3 4">Involved in the activation cascade of caspases responsible for apoptosis execution. At the onset of apoptosis, it proteolytically cleaves poly(ADP-ribose) polymerase PARP1 at a '216-Asp-|-Gly-217' bond. Cleaves and activates sterol regulatory element binding proteins (SREBPs) between the basic helix-loop-helix leucine zipper domain and the membrane attachment domain. Cleaves and activates caspase-6, -7 and -9 (CASP6, CASP7 and CASP9, respectively). Cleaves and inactivates interleukin-18 (IL18) (By similarity). Triggers cell adhesion in sympathetic neurons through RET cleavage (By similarity). Cleaves IL-1 beta between an Asp and an Ala, releasing the mature cytokine which is involved in a variety of inflammatory processes (By similarity). Cleaves and inhibits serine/threonine-protein kinase AKT1 in response to oxidative stress. Acts as an inhibitor of type I interferon production during virus-induced apoptosis by mediating cleavage of antiviral proteins CGAS, IRF3 and MAVS, thereby preventing cytokine overproduction. Also involved in pyroptosis by mediating cleavage and activation of gasdermin-E (GSDME) (By similarity). Cleaves XRCC4 and phospholipid scramblase proteins XKR4, XKR8 and XKR9, leading to promote phosphatidylserine exposure on apoptotic cell surface (By similarity). Cleaves BIRC6 following inhibition of BIRC6-caspase binding by DIABLO/SMAC (By similarity).</text>
</comment>
<comment type="catalytic activity">
    <reaction evidence="2">
        <text>Strict requirement for an Asp residue at positions P1 and P4. It has a preferred cleavage sequence of Asp-Xaa-Xaa-Asp-|- with a hydrophobic amino-acid residue at P2 and a hydrophilic amino-acid residue at P3, although Val or Ala are also accepted at this position.</text>
        <dbReference type="EC" id="3.4.22.56"/>
    </reaction>
</comment>
<comment type="activity regulation">
    <text evidence="2">Inhibited by BIRC6; following inhibition of BIRC6-caspase binding by DIABLO/SMAC, BIRC6 is subjected to caspase cleavage, leading to an increase in active caspases.</text>
</comment>
<comment type="subunit">
    <text evidence="2">Heterotetramer that consists of two anti-parallel arranged heterodimers, each one formed by a 17 kDa (p17) and a 12 kDa (p12) subunit. Interacts with BIRC6/bruce.</text>
</comment>
<comment type="subunit">
    <text evidence="5">(Microbial infection) Subunit p17 interacts with African swine fever virus (ASFV) inhibitor of apoptosis protein.</text>
</comment>
<comment type="subcellular location">
    <subcellularLocation>
        <location evidence="2">Cytoplasm</location>
    </subcellularLocation>
</comment>
<comment type="PTM">
    <text evidence="2">Cleavage by granzyme B, caspase-6, caspase-8 and caspase-10 generates the two active subunits. Additional processing of the propeptides is likely due to the autocatalytic activity of the activated protease. Active heterodimers between the small subunit of caspase-7 protease and the large subunit of caspase-3 also occur and vice versa.</text>
</comment>
<comment type="PTM">
    <text evidence="2">S-nitrosylated on its catalytic site cysteine in unstimulated cell lines and denitrosylated upon activation of the Fas apoptotic pathway, associated with an increase in intracellular caspase activity. Fas therefore activates caspase-3 not only by inducing the cleavage of the caspase zymogen to its active subunits, but also by stimulating the denitrosylation of its active site thiol.</text>
</comment>
<comment type="PTM">
    <text evidence="2">Ubiquitinated by BIRC6; this activity is inhibited by DIABLO/SMAC.</text>
</comment>
<comment type="similarity">
    <text evidence="6">Belongs to the peptidase C14A family.</text>
</comment>
<feature type="propeptide" id="PRO_0000004581" evidence="2">
    <location>
        <begin position="1"/>
        <end position="9"/>
    </location>
</feature>
<feature type="propeptide" id="PRO_0000004582" evidence="2">
    <location>
        <begin position="10"/>
        <end position="28"/>
    </location>
</feature>
<feature type="chain" id="PRO_0000004583" description="Caspase-3 subunit p17" evidence="2">
    <location>
        <begin position="29"/>
        <end position="175"/>
    </location>
</feature>
<feature type="chain" id="PRO_0000004584" description="Caspase-3 subunit p12" evidence="2">
    <location>
        <begin position="176"/>
        <end position="277"/>
    </location>
</feature>
<feature type="active site" evidence="1">
    <location>
        <position position="121"/>
    </location>
</feature>
<feature type="active site" evidence="1">
    <location>
        <position position="163"/>
    </location>
</feature>
<feature type="modified residue" description="N-acetylmethionine" evidence="2">
    <location>
        <position position="1"/>
    </location>
</feature>
<feature type="modified residue" description="N6-acetyllysine" evidence="3">
    <location>
        <position position="11"/>
    </location>
</feature>
<feature type="modified residue" description="Phosphoserine" evidence="2">
    <location>
        <position position="26"/>
    </location>
</feature>
<feature type="modified residue" description="S-nitrosocysteine; in inhibited form" evidence="2">
    <location>
        <position position="163"/>
    </location>
</feature>
<proteinExistence type="evidence at protein level"/>
<evidence type="ECO:0000250" key="1">
    <source>
        <dbReference type="UniProtKB" id="P29466"/>
    </source>
</evidence>
<evidence type="ECO:0000250" key="2">
    <source>
        <dbReference type="UniProtKB" id="P42574"/>
    </source>
</evidence>
<evidence type="ECO:0000250" key="3">
    <source>
        <dbReference type="UniProtKB" id="P70677"/>
    </source>
</evidence>
<evidence type="ECO:0000250" key="4">
    <source>
        <dbReference type="UniProtKB" id="Q60431"/>
    </source>
</evidence>
<evidence type="ECO:0000269" key="5">
    <source>
    </source>
</evidence>
<evidence type="ECO:0000305" key="6"/>